<sequence>MTRNDLLDRLATTQASALETQGLGLVPMVVEQSGRGERAYDIYSRLLKERVVFMVGEVNDQTANLVVAQLLFLESENPDKDVSLYINSPGGSVSAGLAIYDTMQFIKPDVQTLCMGMAASMGAFLLAAGAKGKRSALPNSRIMIHQPLGGARGQASDIEIQAREILYLRERLNSILSEVTGQPVEKIARDTDRDNFMSGDQAVDYGLIDKVITRRS</sequence>
<accession>Q1LM62</accession>
<dbReference type="EC" id="3.4.21.92" evidence="1"/>
<dbReference type="EMBL" id="CP000352">
    <property type="protein sequence ID" value="ABF08764.1"/>
    <property type="molecule type" value="Genomic_DNA"/>
</dbReference>
<dbReference type="RefSeq" id="WP_008651661.1">
    <property type="nucleotide sequence ID" value="NC_007973.1"/>
</dbReference>
<dbReference type="SMR" id="Q1LM62"/>
<dbReference type="STRING" id="266264.Rmet_1885"/>
<dbReference type="MEROPS" id="S14.001"/>
<dbReference type="GeneID" id="60821574"/>
<dbReference type="KEGG" id="rme:Rmet_1885"/>
<dbReference type="eggNOG" id="COG0740">
    <property type="taxonomic scope" value="Bacteria"/>
</dbReference>
<dbReference type="HOGENOM" id="CLU_058707_3_2_4"/>
<dbReference type="Proteomes" id="UP000002429">
    <property type="component" value="Chromosome"/>
</dbReference>
<dbReference type="GO" id="GO:0005737">
    <property type="term" value="C:cytoplasm"/>
    <property type="evidence" value="ECO:0007669"/>
    <property type="project" value="UniProtKB-SubCell"/>
</dbReference>
<dbReference type="GO" id="GO:0009368">
    <property type="term" value="C:endopeptidase Clp complex"/>
    <property type="evidence" value="ECO:0007669"/>
    <property type="project" value="TreeGrafter"/>
</dbReference>
<dbReference type="GO" id="GO:0004176">
    <property type="term" value="F:ATP-dependent peptidase activity"/>
    <property type="evidence" value="ECO:0007669"/>
    <property type="project" value="InterPro"/>
</dbReference>
<dbReference type="GO" id="GO:0051117">
    <property type="term" value="F:ATPase binding"/>
    <property type="evidence" value="ECO:0007669"/>
    <property type="project" value="TreeGrafter"/>
</dbReference>
<dbReference type="GO" id="GO:0004252">
    <property type="term" value="F:serine-type endopeptidase activity"/>
    <property type="evidence" value="ECO:0007669"/>
    <property type="project" value="UniProtKB-UniRule"/>
</dbReference>
<dbReference type="GO" id="GO:0006515">
    <property type="term" value="P:protein quality control for misfolded or incompletely synthesized proteins"/>
    <property type="evidence" value="ECO:0007669"/>
    <property type="project" value="TreeGrafter"/>
</dbReference>
<dbReference type="CDD" id="cd07017">
    <property type="entry name" value="S14_ClpP_2"/>
    <property type="match status" value="1"/>
</dbReference>
<dbReference type="FunFam" id="3.90.226.10:FF:000001">
    <property type="entry name" value="ATP-dependent Clp protease proteolytic subunit"/>
    <property type="match status" value="1"/>
</dbReference>
<dbReference type="Gene3D" id="3.90.226.10">
    <property type="entry name" value="2-enoyl-CoA Hydratase, Chain A, domain 1"/>
    <property type="match status" value="1"/>
</dbReference>
<dbReference type="HAMAP" id="MF_00444">
    <property type="entry name" value="ClpP"/>
    <property type="match status" value="1"/>
</dbReference>
<dbReference type="InterPro" id="IPR001907">
    <property type="entry name" value="ClpP"/>
</dbReference>
<dbReference type="InterPro" id="IPR029045">
    <property type="entry name" value="ClpP/crotonase-like_dom_sf"/>
</dbReference>
<dbReference type="InterPro" id="IPR023562">
    <property type="entry name" value="ClpP/TepA"/>
</dbReference>
<dbReference type="InterPro" id="IPR033135">
    <property type="entry name" value="ClpP_His_AS"/>
</dbReference>
<dbReference type="InterPro" id="IPR018215">
    <property type="entry name" value="ClpP_Ser_AS"/>
</dbReference>
<dbReference type="NCBIfam" id="TIGR00493">
    <property type="entry name" value="clpP"/>
    <property type="match status" value="1"/>
</dbReference>
<dbReference type="NCBIfam" id="NF001368">
    <property type="entry name" value="PRK00277.1"/>
    <property type="match status" value="1"/>
</dbReference>
<dbReference type="NCBIfam" id="NF009205">
    <property type="entry name" value="PRK12553.1"/>
    <property type="match status" value="1"/>
</dbReference>
<dbReference type="PANTHER" id="PTHR10381">
    <property type="entry name" value="ATP-DEPENDENT CLP PROTEASE PROTEOLYTIC SUBUNIT"/>
    <property type="match status" value="1"/>
</dbReference>
<dbReference type="PANTHER" id="PTHR10381:SF70">
    <property type="entry name" value="ATP-DEPENDENT CLP PROTEASE PROTEOLYTIC SUBUNIT"/>
    <property type="match status" value="1"/>
</dbReference>
<dbReference type="Pfam" id="PF00574">
    <property type="entry name" value="CLP_protease"/>
    <property type="match status" value="1"/>
</dbReference>
<dbReference type="PRINTS" id="PR00127">
    <property type="entry name" value="CLPPROTEASEP"/>
</dbReference>
<dbReference type="SUPFAM" id="SSF52096">
    <property type="entry name" value="ClpP/crotonase"/>
    <property type="match status" value="1"/>
</dbReference>
<dbReference type="PROSITE" id="PS00382">
    <property type="entry name" value="CLP_PROTEASE_HIS"/>
    <property type="match status" value="1"/>
</dbReference>
<dbReference type="PROSITE" id="PS00381">
    <property type="entry name" value="CLP_PROTEASE_SER"/>
    <property type="match status" value="1"/>
</dbReference>
<protein>
    <recommendedName>
        <fullName evidence="1">ATP-dependent Clp protease proteolytic subunit</fullName>
        <ecNumber evidence="1">3.4.21.92</ecNumber>
    </recommendedName>
    <alternativeName>
        <fullName evidence="1">Endopeptidase Clp</fullName>
    </alternativeName>
</protein>
<proteinExistence type="inferred from homology"/>
<organism>
    <name type="scientific">Cupriavidus metallidurans (strain ATCC 43123 / DSM 2839 / NBRC 102507 / CH34)</name>
    <name type="common">Ralstonia metallidurans</name>
    <dbReference type="NCBI Taxonomy" id="266264"/>
    <lineage>
        <taxon>Bacteria</taxon>
        <taxon>Pseudomonadati</taxon>
        <taxon>Pseudomonadota</taxon>
        <taxon>Betaproteobacteria</taxon>
        <taxon>Burkholderiales</taxon>
        <taxon>Burkholderiaceae</taxon>
        <taxon>Cupriavidus</taxon>
    </lineage>
</organism>
<gene>
    <name evidence="1" type="primary">clpP</name>
    <name type="ordered locus">Rmet_1885</name>
</gene>
<name>CLPP_CUPMC</name>
<evidence type="ECO:0000255" key="1">
    <source>
        <dbReference type="HAMAP-Rule" id="MF_00444"/>
    </source>
</evidence>
<comment type="function">
    <text evidence="1">Cleaves peptides in various proteins in a process that requires ATP hydrolysis. Has a chymotrypsin-like activity. Plays a major role in the degradation of misfolded proteins.</text>
</comment>
<comment type="catalytic activity">
    <reaction evidence="1">
        <text>Hydrolysis of proteins to small peptides in the presence of ATP and magnesium. alpha-casein is the usual test substrate. In the absence of ATP, only oligopeptides shorter than five residues are hydrolyzed (such as succinyl-Leu-Tyr-|-NHMec, and Leu-Tyr-Leu-|-Tyr-Trp, in which cleavage of the -Tyr-|-Leu- and -Tyr-|-Trp bonds also occurs).</text>
        <dbReference type="EC" id="3.4.21.92"/>
    </reaction>
</comment>
<comment type="subunit">
    <text evidence="1">Fourteen ClpP subunits assemble into 2 heptameric rings which stack back to back to give a disk-like structure with a central cavity, resembling the structure of eukaryotic proteasomes.</text>
</comment>
<comment type="subcellular location">
    <subcellularLocation>
        <location evidence="1">Cytoplasm</location>
    </subcellularLocation>
</comment>
<comment type="similarity">
    <text evidence="1">Belongs to the peptidase S14 family.</text>
</comment>
<keyword id="KW-0963">Cytoplasm</keyword>
<keyword id="KW-0378">Hydrolase</keyword>
<keyword id="KW-0645">Protease</keyword>
<keyword id="KW-1185">Reference proteome</keyword>
<keyword id="KW-0720">Serine protease</keyword>
<reference key="1">
    <citation type="journal article" date="2010" name="PLoS ONE">
        <title>The complete genome sequence of Cupriavidus metallidurans strain CH34, a master survivalist in harsh and anthropogenic environments.</title>
        <authorList>
            <person name="Janssen P.J."/>
            <person name="Van Houdt R."/>
            <person name="Moors H."/>
            <person name="Monsieurs P."/>
            <person name="Morin N."/>
            <person name="Michaux A."/>
            <person name="Benotmane M.A."/>
            <person name="Leys N."/>
            <person name="Vallaeys T."/>
            <person name="Lapidus A."/>
            <person name="Monchy S."/>
            <person name="Medigue C."/>
            <person name="Taghavi S."/>
            <person name="McCorkle S."/>
            <person name="Dunn J."/>
            <person name="van der Lelie D."/>
            <person name="Mergeay M."/>
        </authorList>
    </citation>
    <scope>NUCLEOTIDE SEQUENCE [LARGE SCALE GENOMIC DNA]</scope>
    <source>
        <strain>ATCC 43123 / DSM 2839 / NBRC 102507 / CH34</strain>
    </source>
</reference>
<feature type="chain" id="PRO_0000252831" description="ATP-dependent Clp protease proteolytic subunit">
    <location>
        <begin position="1"/>
        <end position="216"/>
    </location>
</feature>
<feature type="active site" description="Nucleophile" evidence="1">
    <location>
        <position position="120"/>
    </location>
</feature>
<feature type="active site" evidence="1">
    <location>
        <position position="145"/>
    </location>
</feature>